<sequence>MSQDFAHLSVLLAETVDGLNIRADGIYIDGTFGRGGHSREVLSRLGVDGRLIAIDRDPQAIKAAEQFANDSRFQIVHGGFGQLANYVEELGLVGKIDGVLLDLGVSSPQLDDAERGFSFLRDGPLDMRMDNSQGETAAQWLARAEIEDMAWVFKTYGEERNARHIARCIAADREKTPFTRTKQLADLIARVAKSKERNKHPATRVFQAIRIYINSELEQIDQALEGALKVLAPHGRLSIISFHSLEDRIVKRFIRRHSQGEELPHGLPVTEAQLNKSRTLMPVGKAMKPSDVEIEQNARARSSVLRVAERLPF</sequence>
<evidence type="ECO:0000255" key="1">
    <source>
        <dbReference type="HAMAP-Rule" id="MF_01007"/>
    </source>
</evidence>
<keyword id="KW-0963">Cytoplasm</keyword>
<keyword id="KW-0489">Methyltransferase</keyword>
<keyword id="KW-1185">Reference proteome</keyword>
<keyword id="KW-0698">rRNA processing</keyword>
<keyword id="KW-0949">S-adenosyl-L-methionine</keyword>
<keyword id="KW-0808">Transferase</keyword>
<proteinExistence type="inferred from homology"/>
<comment type="function">
    <text evidence="1">Specifically methylates the N4 position of cytidine in position 1402 (C1402) of 16S rRNA.</text>
</comment>
<comment type="catalytic activity">
    <reaction evidence="1">
        <text>cytidine(1402) in 16S rRNA + S-adenosyl-L-methionine = N(4)-methylcytidine(1402) in 16S rRNA + S-adenosyl-L-homocysteine + H(+)</text>
        <dbReference type="Rhea" id="RHEA:42928"/>
        <dbReference type="Rhea" id="RHEA-COMP:10286"/>
        <dbReference type="Rhea" id="RHEA-COMP:10287"/>
        <dbReference type="ChEBI" id="CHEBI:15378"/>
        <dbReference type="ChEBI" id="CHEBI:57856"/>
        <dbReference type="ChEBI" id="CHEBI:59789"/>
        <dbReference type="ChEBI" id="CHEBI:74506"/>
        <dbReference type="ChEBI" id="CHEBI:82748"/>
        <dbReference type="EC" id="2.1.1.199"/>
    </reaction>
</comment>
<comment type="subcellular location">
    <subcellularLocation>
        <location evidence="1">Cytoplasm</location>
    </subcellularLocation>
</comment>
<comment type="similarity">
    <text evidence="1">Belongs to the methyltransferase superfamily. RsmH family.</text>
</comment>
<organism>
    <name type="scientific">Shewanella amazonensis (strain ATCC BAA-1098 / SB2B)</name>
    <dbReference type="NCBI Taxonomy" id="326297"/>
    <lineage>
        <taxon>Bacteria</taxon>
        <taxon>Pseudomonadati</taxon>
        <taxon>Pseudomonadota</taxon>
        <taxon>Gammaproteobacteria</taxon>
        <taxon>Alteromonadales</taxon>
        <taxon>Shewanellaceae</taxon>
        <taxon>Shewanella</taxon>
    </lineage>
</organism>
<protein>
    <recommendedName>
        <fullName evidence="1">Ribosomal RNA small subunit methyltransferase H</fullName>
        <ecNumber evidence="1">2.1.1.199</ecNumber>
    </recommendedName>
    <alternativeName>
        <fullName evidence="1">16S rRNA m(4)C1402 methyltransferase</fullName>
    </alternativeName>
    <alternativeName>
        <fullName evidence="1">rRNA (cytosine-N(4)-)-methyltransferase RsmH</fullName>
    </alternativeName>
</protein>
<name>RSMH_SHEAM</name>
<feature type="chain" id="PRO_0000387109" description="Ribosomal RNA small subunit methyltransferase H">
    <location>
        <begin position="1"/>
        <end position="313"/>
    </location>
</feature>
<feature type="binding site" evidence="1">
    <location>
        <begin position="35"/>
        <end position="37"/>
    </location>
    <ligand>
        <name>S-adenosyl-L-methionine</name>
        <dbReference type="ChEBI" id="CHEBI:59789"/>
    </ligand>
</feature>
<feature type="binding site" evidence="1">
    <location>
        <position position="55"/>
    </location>
    <ligand>
        <name>S-adenosyl-L-methionine</name>
        <dbReference type="ChEBI" id="CHEBI:59789"/>
    </ligand>
</feature>
<feature type="binding site" evidence="1">
    <location>
        <position position="80"/>
    </location>
    <ligand>
        <name>S-adenosyl-L-methionine</name>
        <dbReference type="ChEBI" id="CHEBI:59789"/>
    </ligand>
</feature>
<feature type="binding site" evidence="1">
    <location>
        <position position="102"/>
    </location>
    <ligand>
        <name>S-adenosyl-L-methionine</name>
        <dbReference type="ChEBI" id="CHEBI:59789"/>
    </ligand>
</feature>
<feature type="binding site" evidence="1">
    <location>
        <position position="109"/>
    </location>
    <ligand>
        <name>S-adenosyl-L-methionine</name>
        <dbReference type="ChEBI" id="CHEBI:59789"/>
    </ligand>
</feature>
<accession>A1S2F1</accession>
<gene>
    <name evidence="1" type="primary">rsmH</name>
    <name type="synonym">mraW</name>
    <name type="ordered locus">Sama_0346</name>
</gene>
<dbReference type="EC" id="2.1.1.199" evidence="1"/>
<dbReference type="EMBL" id="CP000507">
    <property type="protein sequence ID" value="ABL98557.1"/>
    <property type="molecule type" value="Genomic_DNA"/>
</dbReference>
<dbReference type="RefSeq" id="WP_011758467.1">
    <property type="nucleotide sequence ID" value="NC_008700.1"/>
</dbReference>
<dbReference type="SMR" id="A1S2F1"/>
<dbReference type="STRING" id="326297.Sama_0346"/>
<dbReference type="KEGG" id="saz:Sama_0346"/>
<dbReference type="eggNOG" id="COG0275">
    <property type="taxonomic scope" value="Bacteria"/>
</dbReference>
<dbReference type="HOGENOM" id="CLU_038422_2_0_6"/>
<dbReference type="OrthoDB" id="9806637at2"/>
<dbReference type="Proteomes" id="UP000009175">
    <property type="component" value="Chromosome"/>
</dbReference>
<dbReference type="GO" id="GO:0005737">
    <property type="term" value="C:cytoplasm"/>
    <property type="evidence" value="ECO:0007669"/>
    <property type="project" value="UniProtKB-SubCell"/>
</dbReference>
<dbReference type="GO" id="GO:0071424">
    <property type="term" value="F:rRNA (cytosine-N4-)-methyltransferase activity"/>
    <property type="evidence" value="ECO:0007669"/>
    <property type="project" value="UniProtKB-UniRule"/>
</dbReference>
<dbReference type="GO" id="GO:0070475">
    <property type="term" value="P:rRNA base methylation"/>
    <property type="evidence" value="ECO:0007669"/>
    <property type="project" value="UniProtKB-UniRule"/>
</dbReference>
<dbReference type="FunFam" id="1.10.150.170:FF:000001">
    <property type="entry name" value="Ribosomal RNA small subunit methyltransferase H"/>
    <property type="match status" value="1"/>
</dbReference>
<dbReference type="Gene3D" id="1.10.150.170">
    <property type="entry name" value="Putative methyltransferase TM0872, insert domain"/>
    <property type="match status" value="1"/>
</dbReference>
<dbReference type="Gene3D" id="3.40.50.150">
    <property type="entry name" value="Vaccinia Virus protein VP39"/>
    <property type="match status" value="1"/>
</dbReference>
<dbReference type="HAMAP" id="MF_01007">
    <property type="entry name" value="16SrRNA_methyltr_H"/>
    <property type="match status" value="1"/>
</dbReference>
<dbReference type="InterPro" id="IPR002903">
    <property type="entry name" value="RsmH"/>
</dbReference>
<dbReference type="InterPro" id="IPR023397">
    <property type="entry name" value="SAM-dep_MeTrfase_MraW_recog"/>
</dbReference>
<dbReference type="InterPro" id="IPR029063">
    <property type="entry name" value="SAM-dependent_MTases_sf"/>
</dbReference>
<dbReference type="NCBIfam" id="TIGR00006">
    <property type="entry name" value="16S rRNA (cytosine(1402)-N(4))-methyltransferase RsmH"/>
    <property type="match status" value="1"/>
</dbReference>
<dbReference type="PANTHER" id="PTHR11265:SF0">
    <property type="entry name" value="12S RRNA N4-METHYLCYTIDINE METHYLTRANSFERASE"/>
    <property type="match status" value="1"/>
</dbReference>
<dbReference type="PANTHER" id="PTHR11265">
    <property type="entry name" value="S-ADENOSYL-METHYLTRANSFERASE MRAW"/>
    <property type="match status" value="1"/>
</dbReference>
<dbReference type="Pfam" id="PF01795">
    <property type="entry name" value="Methyltransf_5"/>
    <property type="match status" value="1"/>
</dbReference>
<dbReference type="PIRSF" id="PIRSF004486">
    <property type="entry name" value="MraW"/>
    <property type="match status" value="1"/>
</dbReference>
<dbReference type="SUPFAM" id="SSF81799">
    <property type="entry name" value="Putative methyltransferase TM0872, insert domain"/>
    <property type="match status" value="1"/>
</dbReference>
<dbReference type="SUPFAM" id="SSF53335">
    <property type="entry name" value="S-adenosyl-L-methionine-dependent methyltransferases"/>
    <property type="match status" value="1"/>
</dbReference>
<reference key="1">
    <citation type="submission" date="2006-12" db="EMBL/GenBank/DDBJ databases">
        <title>Complete sequence of Shewanella amazonensis SB2B.</title>
        <authorList>
            <consortium name="US DOE Joint Genome Institute"/>
            <person name="Copeland A."/>
            <person name="Lucas S."/>
            <person name="Lapidus A."/>
            <person name="Barry K."/>
            <person name="Detter J.C."/>
            <person name="Glavina del Rio T."/>
            <person name="Hammon N."/>
            <person name="Israni S."/>
            <person name="Dalin E."/>
            <person name="Tice H."/>
            <person name="Pitluck S."/>
            <person name="Munk A.C."/>
            <person name="Brettin T."/>
            <person name="Bruce D."/>
            <person name="Han C."/>
            <person name="Tapia R."/>
            <person name="Gilna P."/>
            <person name="Schmutz J."/>
            <person name="Larimer F."/>
            <person name="Land M."/>
            <person name="Hauser L."/>
            <person name="Kyrpides N."/>
            <person name="Mikhailova N."/>
            <person name="Fredrickson J."/>
            <person name="Richardson P."/>
        </authorList>
    </citation>
    <scope>NUCLEOTIDE SEQUENCE [LARGE SCALE GENOMIC DNA]</scope>
    <source>
        <strain>ATCC BAA-1098 / SB2B</strain>
    </source>
</reference>